<keyword id="KW-1185">Reference proteome</keyword>
<keyword id="KW-0687">Ribonucleoprotein</keyword>
<keyword id="KW-0689">Ribosomal protein</keyword>
<evidence type="ECO:0000255" key="1">
    <source>
        <dbReference type="HAMAP-Rule" id="MF_00368"/>
    </source>
</evidence>
<evidence type="ECO:0000305" key="2"/>
<comment type="function">
    <text evidence="1">Forms part of the ribosomal stalk which helps the ribosome interact with GTP-bound translation factors. Is thus essential for accurate translation.</text>
</comment>
<comment type="subunit">
    <text evidence="1">Homodimer. Part of the ribosomal stalk of the 50S ribosomal subunit. Forms a multimeric L10(L12)X complex, where L10 forms an elongated spine to which 2 to 4 L12 dimers bind in a sequential fashion. Binds GTP-bound translation factors.</text>
</comment>
<comment type="similarity">
    <text evidence="1">Belongs to the bacterial ribosomal protein bL12 family.</text>
</comment>
<proteinExistence type="inferred from homology"/>
<name>RL7_STRMU</name>
<feature type="chain" id="PRO_0000243502" description="Large ribosomal subunit protein bL12">
    <location>
        <begin position="1"/>
        <end position="122"/>
    </location>
</feature>
<dbReference type="EMBL" id="AE014133">
    <property type="protein sequence ID" value="AAN58664.1"/>
    <property type="molecule type" value="Genomic_DNA"/>
</dbReference>
<dbReference type="RefSeq" id="NP_721358.1">
    <property type="nucleotide sequence ID" value="NC_004350.2"/>
</dbReference>
<dbReference type="RefSeq" id="WP_002262825.1">
    <property type="nucleotide sequence ID" value="NC_004350.2"/>
</dbReference>
<dbReference type="SMR" id="Q8DUG9"/>
<dbReference type="STRING" id="210007.SMU_960"/>
<dbReference type="GeneID" id="93923998"/>
<dbReference type="KEGG" id="smu:SMU_960"/>
<dbReference type="PATRIC" id="fig|210007.7.peg.855"/>
<dbReference type="eggNOG" id="COG0222">
    <property type="taxonomic scope" value="Bacteria"/>
</dbReference>
<dbReference type="HOGENOM" id="CLU_086499_3_2_9"/>
<dbReference type="OrthoDB" id="9811748at2"/>
<dbReference type="PhylomeDB" id="Q8DUG9"/>
<dbReference type="PRO" id="PR:Q8DUG9"/>
<dbReference type="Proteomes" id="UP000002512">
    <property type="component" value="Chromosome"/>
</dbReference>
<dbReference type="GO" id="GO:0022625">
    <property type="term" value="C:cytosolic large ribosomal subunit"/>
    <property type="evidence" value="ECO:0007669"/>
    <property type="project" value="TreeGrafter"/>
</dbReference>
<dbReference type="GO" id="GO:0003729">
    <property type="term" value="F:mRNA binding"/>
    <property type="evidence" value="ECO:0007669"/>
    <property type="project" value="TreeGrafter"/>
</dbReference>
<dbReference type="GO" id="GO:0003735">
    <property type="term" value="F:structural constituent of ribosome"/>
    <property type="evidence" value="ECO:0007669"/>
    <property type="project" value="InterPro"/>
</dbReference>
<dbReference type="GO" id="GO:0006412">
    <property type="term" value="P:translation"/>
    <property type="evidence" value="ECO:0007669"/>
    <property type="project" value="UniProtKB-UniRule"/>
</dbReference>
<dbReference type="CDD" id="cd00387">
    <property type="entry name" value="Ribosomal_L7_L12"/>
    <property type="match status" value="1"/>
</dbReference>
<dbReference type="FunFam" id="1.20.5.710:FF:000002">
    <property type="entry name" value="50S ribosomal protein L7/L12"/>
    <property type="match status" value="1"/>
</dbReference>
<dbReference type="FunFam" id="3.30.1390.10:FF:000001">
    <property type="entry name" value="50S ribosomal protein L7/L12"/>
    <property type="match status" value="1"/>
</dbReference>
<dbReference type="Gene3D" id="3.30.1390.10">
    <property type="match status" value="1"/>
</dbReference>
<dbReference type="Gene3D" id="1.20.5.710">
    <property type="entry name" value="Single helix bin"/>
    <property type="match status" value="1"/>
</dbReference>
<dbReference type="HAMAP" id="MF_00368">
    <property type="entry name" value="Ribosomal_bL12"/>
    <property type="match status" value="1"/>
</dbReference>
<dbReference type="InterPro" id="IPR000206">
    <property type="entry name" value="Ribosomal_bL12"/>
</dbReference>
<dbReference type="InterPro" id="IPR013823">
    <property type="entry name" value="Ribosomal_bL12_C"/>
</dbReference>
<dbReference type="InterPro" id="IPR014719">
    <property type="entry name" value="Ribosomal_bL12_C/ClpS-like"/>
</dbReference>
<dbReference type="InterPro" id="IPR008932">
    <property type="entry name" value="Ribosomal_bL12_oligo"/>
</dbReference>
<dbReference type="InterPro" id="IPR036235">
    <property type="entry name" value="Ribosomal_bL12_oligo_N_sf"/>
</dbReference>
<dbReference type="NCBIfam" id="TIGR00855">
    <property type="entry name" value="L12"/>
    <property type="match status" value="1"/>
</dbReference>
<dbReference type="PANTHER" id="PTHR45987">
    <property type="entry name" value="39S RIBOSOMAL PROTEIN L12"/>
    <property type="match status" value="1"/>
</dbReference>
<dbReference type="PANTHER" id="PTHR45987:SF4">
    <property type="entry name" value="LARGE RIBOSOMAL SUBUNIT PROTEIN BL12M"/>
    <property type="match status" value="1"/>
</dbReference>
<dbReference type="Pfam" id="PF00542">
    <property type="entry name" value="Ribosomal_L12"/>
    <property type="match status" value="1"/>
</dbReference>
<dbReference type="Pfam" id="PF16320">
    <property type="entry name" value="Ribosomal_L12_N"/>
    <property type="match status" value="1"/>
</dbReference>
<dbReference type="SUPFAM" id="SSF54736">
    <property type="entry name" value="ClpS-like"/>
    <property type="match status" value="1"/>
</dbReference>
<dbReference type="SUPFAM" id="SSF48300">
    <property type="entry name" value="Ribosomal protein L7/12, oligomerisation (N-terminal) domain"/>
    <property type="match status" value="1"/>
</dbReference>
<protein>
    <recommendedName>
        <fullName evidence="1">Large ribosomal subunit protein bL12</fullName>
    </recommendedName>
    <alternativeName>
        <fullName evidence="2">50S ribosomal protein L7/L12</fullName>
    </alternativeName>
</protein>
<organism>
    <name type="scientific">Streptococcus mutans serotype c (strain ATCC 700610 / UA159)</name>
    <dbReference type="NCBI Taxonomy" id="210007"/>
    <lineage>
        <taxon>Bacteria</taxon>
        <taxon>Bacillati</taxon>
        <taxon>Bacillota</taxon>
        <taxon>Bacilli</taxon>
        <taxon>Lactobacillales</taxon>
        <taxon>Streptococcaceae</taxon>
        <taxon>Streptococcus</taxon>
    </lineage>
</organism>
<gene>
    <name evidence="1" type="primary">rplL</name>
    <name type="ordered locus">SMU_960</name>
</gene>
<sequence length="122" mass="12413">MALNIENIIAEIKEASILELNDLVKAIEEEFGVTAAAPVAAAGAAGGEEAAAKDSFDIELTAGGDKKVAVIKVVREITGEGLKEAKGLVDNAPSVLKEGVAAAEAEELKAKLEEAGATVTLK</sequence>
<accession>Q8DUG9</accession>
<reference key="1">
    <citation type="journal article" date="2002" name="Proc. Natl. Acad. Sci. U.S.A.">
        <title>Genome sequence of Streptococcus mutans UA159, a cariogenic dental pathogen.</title>
        <authorList>
            <person name="Ajdic D.J."/>
            <person name="McShan W.M."/>
            <person name="McLaughlin R.E."/>
            <person name="Savic G."/>
            <person name="Chang J."/>
            <person name="Carson M.B."/>
            <person name="Primeaux C."/>
            <person name="Tian R."/>
            <person name="Kenton S."/>
            <person name="Jia H.G."/>
            <person name="Lin S.P."/>
            <person name="Qian Y."/>
            <person name="Li S."/>
            <person name="Zhu H."/>
            <person name="Najar F.Z."/>
            <person name="Lai H."/>
            <person name="White J."/>
            <person name="Roe B.A."/>
            <person name="Ferretti J.J."/>
        </authorList>
    </citation>
    <scope>NUCLEOTIDE SEQUENCE [LARGE SCALE GENOMIC DNA]</scope>
    <source>
        <strain>ATCC 700610 / UA159</strain>
    </source>
</reference>